<comment type="function">
    <text evidence="3">Microtubule inner protein (MIP) part of the dynein-decorated doublet microtubules (DMTs) in cilia axoneme, which is required for motile cilia beating.</text>
</comment>
<comment type="subunit">
    <text evidence="1">Microtubule inner protein component of sperm flagellar doublet microtubules.</text>
</comment>
<comment type="interaction">
    <interactant intactId="EBI-12160437">
        <id>A8MTA8-2</id>
    </interactant>
    <interactant intactId="EBI-11096309">
        <id>Q9NYB9-2</id>
        <label>ABI2</label>
    </interactant>
    <organismsDiffer>false</organismsDiffer>
    <experiments>3</experiments>
</comment>
<comment type="interaction">
    <interactant intactId="EBI-12160437">
        <id>A8MTA8-2</id>
    </interactant>
    <interactant intactId="EBI-1166928">
        <id>Q8N5M1</id>
        <label>ATPAF2</label>
    </interactant>
    <organismsDiffer>false</organismsDiffer>
    <experiments>3</experiments>
</comment>
<comment type="interaction">
    <interactant intactId="EBI-12160437">
        <id>A8MTA8-2</id>
    </interactant>
    <interactant intactId="EBI-1104933">
        <id>Q8N4L8</id>
        <label>CCDC24</label>
    </interactant>
    <organismsDiffer>false</organismsDiffer>
    <experiments>3</experiments>
</comment>
<comment type="interaction">
    <interactant intactId="EBI-12160437">
        <id>A8MTA8-2</id>
    </interactant>
    <interactant intactId="EBI-10192241">
        <id>O95833</id>
        <label>CLIC3</label>
    </interactant>
    <organismsDiffer>false</organismsDiffer>
    <experiments>3</experiments>
</comment>
<comment type="interaction">
    <interactant intactId="EBI-12160437">
        <id>A8MTA8-2</id>
    </interactant>
    <interactant intactId="EBI-751540">
        <id>O95872</id>
        <label>GPANK1</label>
    </interactant>
    <organismsDiffer>false</organismsDiffer>
    <experiments>3</experiments>
</comment>
<comment type="interaction">
    <interactant intactId="EBI-12160437">
        <id>A8MTA8-2</id>
    </interactant>
    <interactant intactId="EBI-11659720">
        <id>Q86YW7</id>
        <label>GPHB5</label>
    </interactant>
    <organismsDiffer>false</organismsDiffer>
    <experiments>3</experiments>
</comment>
<comment type="interaction">
    <interactant intactId="EBI-12160437">
        <id>A8MTA8-2</id>
    </interactant>
    <interactant intactId="EBI-11962084">
        <id>Q3LI66</id>
        <label>KRTAP6-2</label>
    </interactant>
    <organismsDiffer>false</organismsDiffer>
    <experiments>3</experiments>
</comment>
<comment type="interaction">
    <interactant intactId="EBI-12160437">
        <id>A8MTA8-2</id>
    </interactant>
    <interactant intactId="EBI-13287659">
        <id>P06239-3</id>
        <label>LCK</label>
    </interactant>
    <organismsDiffer>false</organismsDiffer>
    <experiments>3</experiments>
</comment>
<comment type="interaction">
    <interactant intactId="EBI-12160437">
        <id>A8MTA8-2</id>
    </interactant>
    <interactant intactId="EBI-739546">
        <id>Q96PV6</id>
        <label>LENG8</label>
    </interactant>
    <organismsDiffer>false</organismsDiffer>
    <experiments>3</experiments>
</comment>
<comment type="interaction">
    <interactant intactId="EBI-12160437">
        <id>A8MTA8-2</id>
    </interactant>
    <interactant intactId="EBI-751857">
        <id>O15481</id>
        <label>MAGEB4</label>
    </interactant>
    <organismsDiffer>false</organismsDiffer>
    <experiments>5</experiments>
</comment>
<comment type="interaction">
    <interactant intactId="EBI-12160437">
        <id>A8MTA8-2</id>
    </interactant>
    <interactant intactId="EBI-9675802">
        <id>Q6PF18</id>
        <label>MORN3</label>
    </interactant>
    <organismsDiffer>false</organismsDiffer>
    <experiments>3</experiments>
</comment>
<comment type="interaction">
    <interactant intactId="EBI-12160437">
        <id>A8MTA8-2</id>
    </interactant>
    <interactant intactId="EBI-5662487">
        <id>Q8TDC0</id>
        <label>MYOZ3</label>
    </interactant>
    <organismsDiffer>false</organismsDiffer>
    <experiments>3</experiments>
</comment>
<comment type="interaction">
    <interactant intactId="EBI-12160437">
        <id>A8MTA8-2</id>
    </interactant>
    <interactant intactId="EBI-79893">
        <id>Q92569</id>
        <label>PIK3R3</label>
    </interactant>
    <organismsDiffer>false</organismsDiffer>
    <experiments>3</experiments>
</comment>
<comment type="interaction">
    <interactant intactId="EBI-12160437">
        <id>A8MTA8-2</id>
    </interactant>
    <interactant intactId="EBI-943588">
        <id>Q16633</id>
        <label>POU2AF1</label>
    </interactant>
    <organismsDiffer>false</organismsDiffer>
    <experiments>3</experiments>
</comment>
<comment type="interaction">
    <interactant intactId="EBI-12160437">
        <id>A8MTA8-2</id>
    </interactant>
    <interactant intactId="EBI-2798044">
        <id>Q2TAL8</id>
        <label>QRICH1</label>
    </interactant>
    <organismsDiffer>false</organismsDiffer>
    <experiments>3</experiments>
</comment>
<comment type="interaction">
    <interactant intactId="EBI-12160437">
        <id>A8MTA8-2</id>
    </interactant>
    <interactant intactId="EBI-740343">
        <id>Q93062-3</id>
        <label>RBPMS</label>
    </interactant>
    <organismsDiffer>false</organismsDiffer>
    <experiments>6</experiments>
</comment>
<comment type="interaction">
    <interactant intactId="EBI-12160437">
        <id>A8MTA8-2</id>
    </interactant>
    <interactant intactId="EBI-712376">
        <id>P40937</id>
        <label>RFC5</label>
    </interactant>
    <organismsDiffer>false</organismsDiffer>
    <experiments>3</experiments>
</comment>
<comment type="interaction">
    <interactant intactId="EBI-12160437">
        <id>A8MTA8-2</id>
    </interactant>
    <interactant intactId="EBI-752030">
        <id>Q96A09</id>
        <label>TENT5B</label>
    </interactant>
    <organismsDiffer>false</organismsDiffer>
    <experiments>3</experiments>
</comment>
<comment type="interaction">
    <interactant intactId="EBI-12160437">
        <id>A8MTA8-2</id>
    </interactant>
    <interactant intactId="EBI-11952651">
        <id>Q7Z6R9</id>
        <label>TFAP2D</label>
    </interactant>
    <organismsDiffer>false</organismsDiffer>
    <experiments>3</experiments>
</comment>
<comment type="interaction">
    <interactant intactId="EBI-12160437">
        <id>A8MTA8-2</id>
    </interactant>
    <interactant intactId="EBI-3939165">
        <id>O43711</id>
        <label>TLX3</label>
    </interactant>
    <organismsDiffer>false</organismsDiffer>
    <experiments>3</experiments>
</comment>
<comment type="interaction">
    <interactant intactId="EBI-12160437">
        <id>A8MTA8-2</id>
    </interactant>
    <interactant intactId="EBI-74615">
        <id>Q9H0E2</id>
        <label>TOLLIP</label>
    </interactant>
    <organismsDiffer>false</organismsDiffer>
    <experiments>3</experiments>
</comment>
<comment type="subcellular location">
    <subcellularLocation>
        <location evidence="3">Cytoplasm</location>
        <location evidence="3">Cytoskeleton</location>
        <location evidence="3">Cilium axoneme</location>
    </subcellularLocation>
    <subcellularLocation>
        <location evidence="1">Cytoplasm</location>
        <location evidence="1">Cytoskeleton</location>
        <location evidence="1">Flagellum axoneme</location>
    </subcellularLocation>
</comment>
<comment type="alternative products">
    <event type="alternative splicing"/>
    <isoform>
        <id>A8MTA8-1</id>
        <name>1</name>
        <sequence type="displayed"/>
    </isoform>
    <isoform>
        <id>A8MTA8-2</id>
        <name>2</name>
        <sequence type="described" ref="VSP_034438 VSP_034439"/>
    </isoform>
</comment>
<comment type="tissue specificity">
    <text evidence="3">Expressed in airway epithelial cells.</text>
</comment>
<comment type="similarity">
    <text evidence="5">Belongs to the CIMIP2 family.</text>
</comment>
<feature type="chain" id="PRO_0000342383" description="Ciliary microtubule inner protein 2B">
    <location>
        <begin position="1"/>
        <end position="275"/>
    </location>
</feature>
<feature type="region of interest" description="Disordered" evidence="2">
    <location>
        <begin position="62"/>
        <end position="84"/>
    </location>
</feature>
<feature type="region of interest" description="Disordered" evidence="2">
    <location>
        <begin position="125"/>
        <end position="169"/>
    </location>
</feature>
<feature type="compositionally biased region" description="Basic and acidic residues" evidence="2">
    <location>
        <begin position="71"/>
        <end position="84"/>
    </location>
</feature>
<feature type="compositionally biased region" description="Basic and acidic residues" evidence="2">
    <location>
        <begin position="125"/>
        <end position="147"/>
    </location>
</feature>
<feature type="splice variant" id="VSP_034438" description="In isoform 2." evidence="4">
    <original>FTGYVPCARFLFGSSFPVLTNQALQEFGQKHSPGSAQDPKHLPPLPRTYPQNLGLLP</original>
    <variation>TAGIWAEALTRQCPGPQTSPPTSQNIPSEPGSFT</variation>
    <location>
        <begin position="183"/>
        <end position="239"/>
    </location>
</feature>
<feature type="splice variant" id="VSP_034439" description="In isoform 2." evidence="4">
    <location>
        <begin position="240"/>
        <end position="275"/>
    </location>
</feature>
<protein>
    <recommendedName>
        <fullName evidence="5">Ciliary microtubule inner protein 2B</fullName>
    </recommendedName>
</protein>
<proteinExistence type="evidence at protein level"/>
<sequence>MAVASTFIPGLNPQNPHYIPGYTGHCPLLRFSVGQTYGQVTGQLLRGPPGLAWPPVHRTLLPPIRPPRSPEVPRESLPVRRGQERLSSSMIPGYTGFVPRAQFIFAKNCSQVWAEALSDFTHLHEKQGSEELPKEAKGRKDTEKDQVPEPEGQLEEPTLEVVEQASPYSMDDRDPRKFFMSGFTGYVPCARFLFGSSFPVLTNQALQEFGQKHSPGSAQDPKHLPPLPRTYPQNLGLLPNYGGYVPGYKFQFGHTFGHLTHDALGLSTFQKQLLA</sequence>
<accession>A8MTA8</accession>
<accession>A1L3B2</accession>
<accession>B7ZBJ0</accession>
<reference key="1">
    <citation type="journal article" date="2004" name="Nature">
        <title>DNA sequence and analysis of human chromosome 9.</title>
        <authorList>
            <person name="Humphray S.J."/>
            <person name="Oliver K."/>
            <person name="Hunt A.R."/>
            <person name="Plumb R.W."/>
            <person name="Loveland J.E."/>
            <person name="Howe K.L."/>
            <person name="Andrews T.D."/>
            <person name="Searle S."/>
            <person name="Hunt S.E."/>
            <person name="Scott C.E."/>
            <person name="Jones M.C."/>
            <person name="Ainscough R."/>
            <person name="Almeida J.P."/>
            <person name="Ambrose K.D."/>
            <person name="Ashwell R.I.S."/>
            <person name="Babbage A.K."/>
            <person name="Babbage S."/>
            <person name="Bagguley C.L."/>
            <person name="Bailey J."/>
            <person name="Banerjee R."/>
            <person name="Barker D.J."/>
            <person name="Barlow K.F."/>
            <person name="Bates K."/>
            <person name="Beasley H."/>
            <person name="Beasley O."/>
            <person name="Bird C.P."/>
            <person name="Bray-Allen S."/>
            <person name="Brown A.J."/>
            <person name="Brown J.Y."/>
            <person name="Burford D."/>
            <person name="Burrill W."/>
            <person name="Burton J."/>
            <person name="Carder C."/>
            <person name="Carter N.P."/>
            <person name="Chapman J.C."/>
            <person name="Chen Y."/>
            <person name="Clarke G."/>
            <person name="Clark S.Y."/>
            <person name="Clee C.M."/>
            <person name="Clegg S."/>
            <person name="Collier R.E."/>
            <person name="Corby N."/>
            <person name="Crosier M."/>
            <person name="Cummings A.T."/>
            <person name="Davies J."/>
            <person name="Dhami P."/>
            <person name="Dunn M."/>
            <person name="Dutta I."/>
            <person name="Dyer L.W."/>
            <person name="Earthrowl M.E."/>
            <person name="Faulkner L."/>
            <person name="Fleming C.J."/>
            <person name="Frankish A."/>
            <person name="Frankland J.A."/>
            <person name="French L."/>
            <person name="Fricker D.G."/>
            <person name="Garner P."/>
            <person name="Garnett J."/>
            <person name="Ghori J."/>
            <person name="Gilbert J.G.R."/>
            <person name="Glison C."/>
            <person name="Grafham D.V."/>
            <person name="Gribble S."/>
            <person name="Griffiths C."/>
            <person name="Griffiths-Jones S."/>
            <person name="Grocock R."/>
            <person name="Guy J."/>
            <person name="Hall R.E."/>
            <person name="Hammond S."/>
            <person name="Harley J.L."/>
            <person name="Harrison E.S.I."/>
            <person name="Hart E.A."/>
            <person name="Heath P.D."/>
            <person name="Henderson C.D."/>
            <person name="Hopkins B.L."/>
            <person name="Howard P.J."/>
            <person name="Howden P.J."/>
            <person name="Huckle E."/>
            <person name="Johnson C."/>
            <person name="Johnson D."/>
            <person name="Joy A.A."/>
            <person name="Kay M."/>
            <person name="Keenan S."/>
            <person name="Kershaw J.K."/>
            <person name="Kimberley A.M."/>
            <person name="King A."/>
            <person name="Knights A."/>
            <person name="Laird G.K."/>
            <person name="Langford C."/>
            <person name="Lawlor S."/>
            <person name="Leongamornlert D.A."/>
            <person name="Leversha M."/>
            <person name="Lloyd C."/>
            <person name="Lloyd D.M."/>
            <person name="Lovell J."/>
            <person name="Martin S."/>
            <person name="Mashreghi-Mohammadi M."/>
            <person name="Matthews L."/>
            <person name="McLaren S."/>
            <person name="McLay K.E."/>
            <person name="McMurray A."/>
            <person name="Milne S."/>
            <person name="Nickerson T."/>
            <person name="Nisbett J."/>
            <person name="Nordsiek G."/>
            <person name="Pearce A.V."/>
            <person name="Peck A.I."/>
            <person name="Porter K.M."/>
            <person name="Pandian R."/>
            <person name="Pelan S."/>
            <person name="Phillimore B."/>
            <person name="Povey S."/>
            <person name="Ramsey Y."/>
            <person name="Rand V."/>
            <person name="Scharfe M."/>
            <person name="Sehra H.K."/>
            <person name="Shownkeen R."/>
            <person name="Sims S.K."/>
            <person name="Skuce C.D."/>
            <person name="Smith M."/>
            <person name="Steward C.A."/>
            <person name="Swarbreck D."/>
            <person name="Sycamore N."/>
            <person name="Tester J."/>
            <person name="Thorpe A."/>
            <person name="Tracey A."/>
            <person name="Tromans A."/>
            <person name="Thomas D.W."/>
            <person name="Wall M."/>
            <person name="Wallis J.M."/>
            <person name="West A.P."/>
            <person name="Whitehead S.L."/>
            <person name="Willey D.L."/>
            <person name="Williams S.A."/>
            <person name="Wilming L."/>
            <person name="Wray P.W."/>
            <person name="Young L."/>
            <person name="Ashurst J.L."/>
            <person name="Coulson A."/>
            <person name="Blocker H."/>
            <person name="Durbin R.M."/>
            <person name="Sulston J.E."/>
            <person name="Hubbard T."/>
            <person name="Jackson M.J."/>
            <person name="Bentley D.R."/>
            <person name="Beck S."/>
            <person name="Rogers J."/>
            <person name="Dunham I."/>
        </authorList>
    </citation>
    <scope>NUCLEOTIDE SEQUENCE [LARGE SCALE GENOMIC DNA]</scope>
</reference>
<reference key="2">
    <citation type="journal article" date="2004" name="Genome Res.">
        <title>The status, quality, and expansion of the NIH full-length cDNA project: the Mammalian Gene Collection (MGC).</title>
        <authorList>
            <consortium name="The MGC Project Team"/>
        </authorList>
    </citation>
    <scope>NUCLEOTIDE SEQUENCE [LARGE SCALE MRNA] (ISOFORMS 1 AND 2)</scope>
    <source>
        <tissue>Brain cortex</tissue>
    </source>
</reference>
<reference evidence="7" key="3">
    <citation type="journal article" date="2022" name="Proc. Natl. Acad. Sci. U.S.A.">
        <title>SPACA9 is a lumenal protein of human ciliary singlet and doublet microtubules.</title>
        <authorList>
            <person name="Gui M."/>
            <person name="Croft J.T."/>
            <person name="Zabeo D."/>
            <person name="Acharya V."/>
            <person name="Kollman J.M."/>
            <person name="Burgoyne T."/>
            <person name="Hoog J.L."/>
            <person name="Brown A."/>
        </authorList>
    </citation>
    <scope>STRUCTURE BY ELECTRON MICROSCOPY (3.60 ANGSTROMS)</scope>
    <scope>FUNCTION</scope>
    <scope>SUBCELLULAR LOCATION</scope>
    <scope>TISSUE SPECIFICITY</scope>
</reference>
<gene>
    <name evidence="6" type="primary">CIMIP2B</name>
    <name type="synonym">FAM166B</name>
</gene>
<organism>
    <name type="scientific">Homo sapiens</name>
    <name type="common">Human</name>
    <dbReference type="NCBI Taxonomy" id="9606"/>
    <lineage>
        <taxon>Eukaryota</taxon>
        <taxon>Metazoa</taxon>
        <taxon>Chordata</taxon>
        <taxon>Craniata</taxon>
        <taxon>Vertebrata</taxon>
        <taxon>Euteleostomi</taxon>
        <taxon>Mammalia</taxon>
        <taxon>Eutheria</taxon>
        <taxon>Euarchontoglires</taxon>
        <taxon>Primates</taxon>
        <taxon>Haplorrhini</taxon>
        <taxon>Catarrhini</taxon>
        <taxon>Hominidae</taxon>
        <taxon>Homo</taxon>
    </lineage>
</organism>
<evidence type="ECO:0000250" key="1">
    <source>
        <dbReference type="UniProtKB" id="A2AIP0"/>
    </source>
</evidence>
<evidence type="ECO:0000256" key="2">
    <source>
        <dbReference type="SAM" id="MobiDB-lite"/>
    </source>
</evidence>
<evidence type="ECO:0000269" key="3">
    <source>
    </source>
</evidence>
<evidence type="ECO:0000303" key="4">
    <source>
    </source>
</evidence>
<evidence type="ECO:0000305" key="5"/>
<evidence type="ECO:0000312" key="6">
    <source>
        <dbReference type="HGNC" id="HGNC:34242"/>
    </source>
</evidence>
<evidence type="ECO:0007744" key="7">
    <source>
        <dbReference type="PDB" id="7UNG"/>
    </source>
</evidence>
<dbReference type="EMBL" id="AL133476">
    <property type="status" value="NOT_ANNOTATED_CDS"/>
    <property type="molecule type" value="Genomic_DNA"/>
</dbReference>
<dbReference type="EMBL" id="BC129999">
    <property type="protein sequence ID" value="AAI30000.1"/>
    <property type="molecule type" value="mRNA"/>
</dbReference>
<dbReference type="EMBL" id="BC146928">
    <property type="protein sequence ID" value="AAI46929.1"/>
    <property type="molecule type" value="mRNA"/>
</dbReference>
<dbReference type="EMBL" id="BC146933">
    <property type="protein sequence ID" value="AAI46934.1"/>
    <property type="molecule type" value="mRNA"/>
</dbReference>
<dbReference type="CCDS" id="CCDS47963.1">
    <molecule id="A8MTA8-2"/>
</dbReference>
<dbReference type="CCDS" id="CCDS56572.1">
    <molecule id="A8MTA8-1"/>
</dbReference>
<dbReference type="RefSeq" id="NP_001093421.1">
    <molecule id="A8MTA8-2"/>
    <property type="nucleotide sequence ID" value="NM_001099951.4"/>
</dbReference>
<dbReference type="RefSeq" id="NP_001157782.1">
    <molecule id="A8MTA8-1"/>
    <property type="nucleotide sequence ID" value="NM_001164310.3"/>
</dbReference>
<dbReference type="RefSeq" id="NP_001274168.1">
    <property type="nucleotide sequence ID" value="NM_001287239.1"/>
</dbReference>
<dbReference type="PDB" id="7UNG">
    <property type="method" value="EM"/>
    <property type="resolution" value="3.60 A"/>
    <property type="chains" value="H/I/J/K/L/M/N=1-275"/>
</dbReference>
<dbReference type="PDB" id="8J07">
    <property type="method" value="EM"/>
    <property type="resolution" value="4.10 A"/>
    <property type="chains" value="4A/4B/4C/4D/4E/4F/4G/4H/4I/4J/4K/4L/4M=1-275"/>
</dbReference>
<dbReference type="PDBsum" id="7UNG"/>
<dbReference type="PDBsum" id="8J07"/>
<dbReference type="EMDB" id="EMD-26624"/>
<dbReference type="EMDB" id="EMD-35888"/>
<dbReference type="SMR" id="A8MTA8"/>
<dbReference type="BioGRID" id="610500">
    <property type="interactions" value="26"/>
</dbReference>
<dbReference type="FunCoup" id="A8MTA8">
    <property type="interactions" value="20"/>
</dbReference>
<dbReference type="IntAct" id="A8MTA8">
    <property type="interactions" value="22"/>
</dbReference>
<dbReference type="STRING" id="9606.ENSP00000382646"/>
<dbReference type="iPTMnet" id="A8MTA8"/>
<dbReference type="PhosphoSitePlus" id="A8MTA8"/>
<dbReference type="BioMuta" id="FAM166B"/>
<dbReference type="jPOST" id="A8MTA8"/>
<dbReference type="MassIVE" id="A8MTA8"/>
<dbReference type="PaxDb" id="9606-ENSP00000382646"/>
<dbReference type="PeptideAtlas" id="A8MTA8"/>
<dbReference type="ProteomicsDB" id="2008">
    <molecule id="A8MTA8-1"/>
</dbReference>
<dbReference type="ProteomicsDB" id="2009">
    <molecule id="A8MTA8-2"/>
</dbReference>
<dbReference type="TopDownProteomics" id="A8MTA8-2">
    <molecule id="A8MTA8-2"/>
</dbReference>
<dbReference type="Antibodypedia" id="51192">
    <property type="antibodies" value="19 antibodies from 10 providers"/>
</dbReference>
<dbReference type="DNASU" id="730112"/>
<dbReference type="Ensembl" id="ENST00000399742.7">
    <molecule id="A8MTA8-1"/>
    <property type="protein sequence ID" value="ENSP00000382646.2"/>
    <property type="gene ID" value="ENSG00000215187.13"/>
</dbReference>
<dbReference type="Ensembl" id="ENST00000447837.1">
    <molecule id="A8MTA8-2"/>
    <property type="protein sequence ID" value="ENSP00000412746.1"/>
    <property type="gene ID" value="ENSG00000215187.13"/>
</dbReference>
<dbReference type="GeneID" id="730112"/>
<dbReference type="KEGG" id="hsa:730112"/>
<dbReference type="MANE-Select" id="ENST00000399742.7">
    <property type="protein sequence ID" value="ENSP00000382646.2"/>
    <property type="RefSeq nucleotide sequence ID" value="NM_001164310.3"/>
    <property type="RefSeq protein sequence ID" value="NP_001157782.1"/>
</dbReference>
<dbReference type="UCSC" id="uc003zwy.4">
    <molecule id="A8MTA8-1"/>
    <property type="organism name" value="human"/>
</dbReference>
<dbReference type="AGR" id="HGNC:34242"/>
<dbReference type="CTD" id="730112"/>
<dbReference type="DisGeNET" id="730112"/>
<dbReference type="GeneCards" id="CIMIP2B"/>
<dbReference type="HGNC" id="HGNC:34242">
    <property type="gene designation" value="CIMIP2B"/>
</dbReference>
<dbReference type="HPA" id="ENSG00000215187">
    <property type="expression patterns" value="Tissue enhanced (adrenal gland, skeletal muscle)"/>
</dbReference>
<dbReference type="neXtProt" id="NX_A8MTA8"/>
<dbReference type="OpenTargets" id="ENSG00000215187"/>
<dbReference type="PharmGKB" id="PA162387040"/>
<dbReference type="VEuPathDB" id="HostDB:ENSG00000215187"/>
<dbReference type="eggNOG" id="ENOG502RTSD">
    <property type="taxonomic scope" value="Eukaryota"/>
</dbReference>
<dbReference type="GeneTree" id="ENSGT00940000154822"/>
<dbReference type="HOGENOM" id="CLU_065650_0_0_1"/>
<dbReference type="InParanoid" id="A8MTA8"/>
<dbReference type="OMA" id="CCGQDLT"/>
<dbReference type="OrthoDB" id="2019884at2759"/>
<dbReference type="PAN-GO" id="A8MTA8">
    <property type="GO annotations" value="0 GO annotations based on evolutionary models"/>
</dbReference>
<dbReference type="PhylomeDB" id="A8MTA8"/>
<dbReference type="TreeFam" id="TF325739"/>
<dbReference type="PathwayCommons" id="A8MTA8"/>
<dbReference type="SignaLink" id="A8MTA8"/>
<dbReference type="BioGRID-ORCS" id="730112">
    <property type="hits" value="14 hits in 1140 CRISPR screens"/>
</dbReference>
<dbReference type="ChiTaRS" id="FAM166B">
    <property type="organism name" value="human"/>
</dbReference>
<dbReference type="GenomeRNAi" id="730112"/>
<dbReference type="Pharos" id="A8MTA8">
    <property type="development level" value="Tdark"/>
</dbReference>
<dbReference type="PRO" id="PR:A8MTA8"/>
<dbReference type="Proteomes" id="UP000005640">
    <property type="component" value="Chromosome 9"/>
</dbReference>
<dbReference type="RNAct" id="A8MTA8">
    <property type="molecule type" value="protein"/>
</dbReference>
<dbReference type="Bgee" id="ENSG00000215187">
    <property type="expression patterns" value="Expressed in adrenal tissue and 105 other cell types or tissues"/>
</dbReference>
<dbReference type="ExpressionAtlas" id="A8MTA8">
    <property type="expression patterns" value="baseline and differential"/>
</dbReference>
<dbReference type="GO" id="GO:0005879">
    <property type="term" value="C:axonemal microtubule"/>
    <property type="evidence" value="ECO:0000314"/>
    <property type="project" value="UniProtKB"/>
</dbReference>
<dbReference type="GO" id="GO:0031514">
    <property type="term" value="C:motile cilium"/>
    <property type="evidence" value="ECO:0007669"/>
    <property type="project" value="UniProtKB-KW"/>
</dbReference>
<dbReference type="InterPro" id="IPR018902">
    <property type="entry name" value="CMI2A-C-like_dom"/>
</dbReference>
<dbReference type="PANTHER" id="PTHR22146">
    <property type="entry name" value="CAT EYE SYNDROME CRITICAL REGION PROTEIN 6"/>
    <property type="match status" value="1"/>
</dbReference>
<dbReference type="PANTHER" id="PTHR22146:SF8">
    <property type="entry name" value="PROTEIN FAM166B"/>
    <property type="match status" value="1"/>
</dbReference>
<dbReference type="Pfam" id="PF10629">
    <property type="entry name" value="CMI2B-like"/>
    <property type="match status" value="2"/>
</dbReference>
<name>CMI2B_HUMAN</name>
<keyword id="KW-0002">3D-structure</keyword>
<keyword id="KW-0025">Alternative splicing</keyword>
<keyword id="KW-0966">Cell projection</keyword>
<keyword id="KW-0969">Cilium</keyword>
<keyword id="KW-0963">Cytoplasm</keyword>
<keyword id="KW-0206">Cytoskeleton</keyword>
<keyword id="KW-0282">Flagellum</keyword>
<keyword id="KW-1267">Proteomics identification</keyword>
<keyword id="KW-1185">Reference proteome</keyword>